<reference key="1">
    <citation type="journal article" date="2004" name="Science">
        <title>The 1.2-megabase genome sequence of Mimivirus.</title>
        <authorList>
            <person name="Raoult D."/>
            <person name="Audic S."/>
            <person name="Robert C."/>
            <person name="Abergel C."/>
            <person name="Renesto P."/>
            <person name="Ogata H."/>
            <person name="La Scola B."/>
            <person name="Susan M."/>
            <person name="Claverie J.-M."/>
        </authorList>
    </citation>
    <scope>NUCLEOTIDE SEQUENCE [LARGE SCALE GENOMIC DNA]</scope>
    <source>
        <strain>Rowbotham-Bradford</strain>
    </source>
</reference>
<organismHost>
    <name type="scientific">Acanthamoeba polyphaga</name>
    <name type="common">Amoeba</name>
    <dbReference type="NCBI Taxonomy" id="5757"/>
</organismHost>
<organism>
    <name type="scientific">Acanthamoeba polyphaga mimivirus</name>
    <name type="common">APMV</name>
    <dbReference type="NCBI Taxonomy" id="212035"/>
    <lineage>
        <taxon>Viruses</taxon>
        <taxon>Varidnaviria</taxon>
        <taxon>Bamfordvirae</taxon>
        <taxon>Nucleocytoviricota</taxon>
        <taxon>Megaviricetes</taxon>
        <taxon>Imitervirales</taxon>
        <taxon>Mimiviridae</taxon>
        <taxon>Megamimivirinae</taxon>
        <taxon>Mimivirus</taxon>
        <taxon>Mimivirus bradfordmassiliense</taxon>
    </lineage>
</organism>
<sequence>MTTTNNVLLVDDQHRNIGVTDDLHTIESLKSELTLDYDLPTLCGKNLDSPNILLNSIEKFKETFNKHYPFLEKINMKNLLIAGGSVSNIVRNKFQYGSDIDFFIYGLNQQEASSRVRQWLIDILVKKPDNSSEKTTTKKIDMTKYYKIIRNNNCITILLDHGDLKLQLIFRLYQSISEILHGFDLGSSAVGYDGENVYFTTLGKYCHEYSCNVIDTTRRSTTYEYRLNKYFDRGFNIVVPKLDLSKLKTFNLKYGEVEICELPYFIFSYQNIIGNKIIVKKFYDKYNIKSDYGLEPINSTNLYYQSLKINIGNLINDVDYYYYVSSHIDKQNTDILTKAPRLTKGDIITFYDGVRTKLNGKNIDVCLIRKYITIDTIENIVATMFHKDTNVKEYFDSIIEKQKELALNKLDILLQKNHNIVWITENPGKQLTSSFNPIIEVESKWYGEFYKE</sequence>
<dbReference type="EMBL" id="AY653733">
    <property type="protein sequence ID" value="AAV51140.1"/>
    <property type="molecule type" value="Genomic_DNA"/>
</dbReference>
<dbReference type="KEGG" id="vg:9925552"/>
<dbReference type="OrthoDB" id="5121at10239"/>
<dbReference type="Proteomes" id="UP000001134">
    <property type="component" value="Genome"/>
</dbReference>
<dbReference type="InterPro" id="IPR053354">
    <property type="entry name" value="MGDG_epimerase"/>
</dbReference>
<dbReference type="PANTHER" id="PTHR43558">
    <property type="entry name" value="REDUCTASE, PUTATIVE (AFU_ORTHOLOGUE AFUA_3G10540)-RELATED"/>
    <property type="match status" value="1"/>
</dbReference>
<dbReference type="PANTHER" id="PTHR43558:SF6">
    <property type="entry name" value="REDUCTASE, PUTATIVE (AFU_ORTHOLOGUE AFUA_3G10540)-RELATED"/>
    <property type="match status" value="1"/>
</dbReference>
<accession>Q5UQX5</accession>
<protein>
    <recommendedName>
        <fullName>Uncharacterized protein R883</fullName>
    </recommendedName>
</protein>
<keyword id="KW-1185">Reference proteome</keyword>
<feature type="chain" id="PRO_0000253926" description="Uncharacterized protein R883">
    <location>
        <begin position="1"/>
        <end position="452"/>
    </location>
</feature>
<proteinExistence type="predicted"/>
<gene>
    <name type="ordered locus">MIMI_R883</name>
</gene>
<name>YR883_MIMIV</name>